<feature type="initiator methionine" description="Removed" evidence="6 13">
    <location>
        <position position="1"/>
    </location>
</feature>
<feature type="chain" id="PRO_0000120987" description="COP9 signalosome complex subunit 4">
    <location>
        <begin position="2"/>
        <end position="406"/>
    </location>
</feature>
<feature type="domain" description="PCI" evidence="1">
    <location>
        <begin position="197"/>
        <end position="366"/>
    </location>
</feature>
<feature type="modified residue" description="N-acetylalanine" evidence="6 13">
    <location>
        <position position="2"/>
    </location>
</feature>
<feature type="modified residue" description="N6-acetyllysine" evidence="14">
    <location>
        <position position="25"/>
    </location>
</feature>
<feature type="splice variant" id="VSP_046336" description="In isoform 2." evidence="11">
    <original>AEKIASQMITEGRMNGFIDQIDGIVHFETREALPTWDKQIQSLCFQVNNLLEKISQTAPEWTAQAMEAQMAQ</original>
    <variation>HEKPCQRGISRSNHFVSK</variation>
    <location>
        <begin position="335"/>
        <end position="406"/>
    </location>
</feature>
<feature type="sequence conflict" description="In Ref. 1; AAD43021." evidence="12" ref="1">
    <location>
        <position position="2"/>
    </location>
</feature>
<feature type="sequence conflict" description="In Ref. 2; BAA91555." evidence="12" ref="2">
    <original>I</original>
    <variation>V</variation>
    <location>
        <position position="97"/>
    </location>
</feature>
<feature type="helix" evidence="15">
    <location>
        <begin position="2"/>
        <end position="12"/>
    </location>
</feature>
<feature type="helix" evidence="15">
    <location>
        <begin position="19"/>
        <end position="34"/>
    </location>
</feature>
<feature type="helix" evidence="15">
    <location>
        <begin position="39"/>
        <end position="53"/>
    </location>
</feature>
<feature type="helix" evidence="15">
    <location>
        <begin position="59"/>
        <end position="72"/>
    </location>
</feature>
<feature type="helix" evidence="15">
    <location>
        <begin position="73"/>
        <end position="75"/>
    </location>
</feature>
<feature type="helix" evidence="15">
    <location>
        <begin position="78"/>
        <end position="92"/>
    </location>
</feature>
<feature type="helix" evidence="15">
    <location>
        <begin position="93"/>
        <end position="99"/>
    </location>
</feature>
<feature type="helix" evidence="15">
    <location>
        <begin position="100"/>
        <end position="116"/>
    </location>
</feature>
<feature type="helix" evidence="15">
    <location>
        <begin position="120"/>
        <end position="128"/>
    </location>
</feature>
<feature type="turn" evidence="15">
    <location>
        <begin position="132"/>
        <end position="134"/>
    </location>
</feature>
<feature type="strand" evidence="15">
    <location>
        <begin position="135"/>
        <end position="137"/>
    </location>
</feature>
<feature type="helix" evidence="15">
    <location>
        <begin position="141"/>
        <end position="157"/>
    </location>
</feature>
<feature type="helix" evidence="15">
    <location>
        <begin position="161"/>
        <end position="172"/>
    </location>
</feature>
<feature type="helix" evidence="15">
    <location>
        <begin position="175"/>
        <end position="177"/>
    </location>
</feature>
<feature type="helix" evidence="15">
    <location>
        <begin position="181"/>
        <end position="197"/>
    </location>
</feature>
<feature type="helix" evidence="15">
    <location>
        <begin position="201"/>
        <end position="211"/>
    </location>
</feature>
<feature type="helix" evidence="15">
    <location>
        <begin position="219"/>
        <end position="235"/>
    </location>
</feature>
<feature type="helix" evidence="15">
    <location>
        <begin position="240"/>
        <end position="251"/>
    </location>
</feature>
<feature type="helix" evidence="15">
    <location>
        <begin position="253"/>
        <end position="257"/>
    </location>
</feature>
<feature type="helix" evidence="15">
    <location>
        <begin position="261"/>
        <end position="268"/>
    </location>
</feature>
<feature type="helix" evidence="15">
    <location>
        <begin position="275"/>
        <end position="278"/>
    </location>
</feature>
<feature type="helix" evidence="15">
    <location>
        <begin position="279"/>
        <end position="283"/>
    </location>
</feature>
<feature type="helix" evidence="15">
    <location>
        <begin position="287"/>
        <end position="290"/>
    </location>
</feature>
<feature type="helix" evidence="15">
    <location>
        <begin position="299"/>
        <end position="315"/>
    </location>
</feature>
<feature type="strand" evidence="15">
    <location>
        <begin position="317"/>
        <end position="320"/>
    </location>
</feature>
<feature type="helix" evidence="15">
    <location>
        <begin position="321"/>
        <end position="328"/>
    </location>
</feature>
<feature type="helix" evidence="15">
    <location>
        <begin position="332"/>
        <end position="344"/>
    </location>
</feature>
<feature type="strand" evidence="15">
    <location>
        <begin position="350"/>
        <end position="353"/>
    </location>
</feature>
<feature type="turn" evidence="15">
    <location>
        <begin position="354"/>
        <end position="357"/>
    </location>
</feature>
<feature type="strand" evidence="15">
    <location>
        <begin position="358"/>
        <end position="361"/>
    </location>
</feature>
<comment type="function">
    <text evidence="2 3 4 5 7 10">Component of the COP9 signalosome complex (CSN), a complex involved in various cellular and developmental processes. The CSN complex is an essential regulator of the ubiquitin (Ubl) conjugation pathway by mediating the deneddylation of the cullin subunits of SCF-type E3 ligase complexes, leading to decrease the Ubl ligase activity of SCF-type complexes such as SCF, CSA or DDB2. Also involved in the deneddylation of non-cullin subunits such as STON2. The complex is also involved in phosphorylation of p53/TP53, c-jun/JUN, IkappaBalpha/NFKBIA, ITPK1, IRF8/ICSBP and SNAPIN, possibly via its association with CK2 and PKD kinases. CSN-dependent phosphorylation of TP53 and JUN promotes and protects degradation by the Ubl system, respectively.</text>
</comment>
<comment type="subunit">
    <text evidence="6 7 8 9">Component of the CSN complex, composed of COPS1/GPS1, COPS2, COPS3, COPS4, COPS5, COPS6, COPS7 (COPS7A or COPS7B), COPS8 and COPS9 isoform 1 (PubMed:18850735, PubMed:26456823). In the complex, it probably interacts directly with COPS1, COPS2, COPS3, COPS5, COPS6, COPS7 (COPS7A or COPS7B) and COPS8 (PubMed:18850735). Interacts with TOR1A; the interaction is direct and associates TOR1A and SNAPIN with the CSN complex (PubMed:21102408). Interacts with STON2; controls STON2 neddylation levels (PubMed:21102408). Interacts with ERCC6 (PubMed:26030138).</text>
</comment>
<comment type="interaction">
    <interactant intactId="EBI-742413">
        <id>Q9BT78</id>
    </interactant>
    <interactant intactId="EBI-741210">
        <id>Q0VDD7</id>
        <label>BRME1</label>
    </interactant>
    <organismsDiffer>false</organismsDiffer>
    <experiments>2</experiments>
</comment>
<comment type="interaction">
    <interactant intactId="EBI-742413">
        <id>Q9BT78</id>
    </interactant>
    <interactant intactId="EBI-486838">
        <id>Q7L5N1</id>
        <label>COPS6</label>
    </interactant>
    <organismsDiffer>false</organismsDiffer>
    <experiments>20</experiments>
</comment>
<comment type="interaction">
    <interactant intactId="EBI-742413">
        <id>Q9BT78</id>
    </interactant>
    <interactant intactId="EBI-852851">
        <id>P01100</id>
        <label>FOS</label>
    </interactant>
    <organismsDiffer>false</organismsDiffer>
    <experiments>2</experiments>
</comment>
<comment type="interaction">
    <interactant intactId="EBI-742413">
        <id>Q9BT78</id>
    </interactant>
    <interactant intactId="EBI-742756">
        <id>P08727</id>
        <label>KRT19</label>
    </interactant>
    <organismsDiffer>false</organismsDiffer>
    <experiments>3</experiments>
</comment>
<comment type="interaction">
    <interactant intactId="EBI-742413">
        <id>Q9BT78</id>
    </interactant>
    <interactant intactId="EBI-2811583">
        <id>Q9BVL2</id>
        <label>NUP58</label>
    </interactant>
    <organismsDiffer>false</organismsDiffer>
    <experiments>3</experiments>
</comment>
<comment type="interaction">
    <interactant intactId="EBI-742413">
        <id>Q9BT78</id>
    </interactant>
    <interactant intactId="EBI-12012016">
        <id>Q9Y5F1</id>
        <label>PCDHB12</label>
    </interactant>
    <organismsDiffer>false</organismsDiffer>
    <experiments>3</experiments>
</comment>
<comment type="interaction">
    <interactant intactId="EBI-742413">
        <id>Q9BT78</id>
    </interactant>
    <interactant intactId="EBI-594898">
        <id>O75381</id>
        <label>PEX14</label>
    </interactant>
    <organismsDiffer>false</organismsDiffer>
    <experiments>3</experiments>
</comment>
<comment type="interaction">
    <interactant intactId="EBI-742413">
        <id>Q9BT78</id>
    </interactant>
    <interactant intactId="EBI-306838">
        <id>Q15831</id>
        <label>STK11</label>
    </interactant>
    <organismsDiffer>false</organismsDiffer>
    <experiments>4</experiments>
</comment>
<comment type="interaction">
    <interactant intactId="EBI-742413">
        <id>Q9BT78</id>
    </interactant>
    <interactant intactId="EBI-739895">
        <id>Q8N6Y0</id>
        <label>USHBP1</label>
    </interactant>
    <organismsDiffer>false</organismsDiffer>
    <experiments>7</experiments>
</comment>
<comment type="subcellular location">
    <subcellularLocation>
        <location evidence="10">Cytoplasm</location>
    </subcellularLocation>
    <subcellularLocation>
        <location evidence="10">Nucleus</location>
    </subcellularLocation>
    <subcellularLocation>
        <location evidence="7">Cytoplasmic vesicle</location>
        <location evidence="7">Secretory vesicle</location>
        <location evidence="7">Synaptic vesicle</location>
    </subcellularLocation>
</comment>
<comment type="alternative products">
    <event type="alternative splicing"/>
    <isoform>
        <id>Q9BT78-1</id>
        <name>1</name>
        <sequence type="displayed"/>
    </isoform>
    <isoform>
        <id>Q9BT78-2</id>
        <name>2</name>
        <sequence type="described" ref="VSP_046336"/>
    </isoform>
</comment>
<comment type="similarity">
    <text evidence="12">Belongs to the CSN4 family.</text>
</comment>
<dbReference type="EMBL" id="AF100757">
    <property type="protein sequence ID" value="AAD43021.1"/>
    <property type="molecule type" value="mRNA"/>
</dbReference>
<dbReference type="EMBL" id="AK001210">
    <property type="protein sequence ID" value="BAA91555.1"/>
    <property type="molecule type" value="mRNA"/>
</dbReference>
<dbReference type="EMBL" id="AK024005">
    <property type="protein sequence ID" value="BAG51250.1"/>
    <property type="molecule type" value="mRNA"/>
</dbReference>
<dbReference type="EMBL" id="AK094238">
    <property type="protein sequence ID" value="BAG52847.1"/>
    <property type="molecule type" value="mRNA"/>
</dbReference>
<dbReference type="EMBL" id="AC021105">
    <property type="status" value="NOT_ANNOTATED_CDS"/>
    <property type="molecule type" value="Genomic_DNA"/>
</dbReference>
<dbReference type="EMBL" id="AC073840">
    <property type="status" value="NOT_ANNOTATED_CDS"/>
    <property type="molecule type" value="Genomic_DNA"/>
</dbReference>
<dbReference type="EMBL" id="AC108473">
    <property type="status" value="NOT_ANNOTATED_CDS"/>
    <property type="molecule type" value="Genomic_DNA"/>
</dbReference>
<dbReference type="EMBL" id="CH471057">
    <property type="protein sequence ID" value="EAX05921.1"/>
    <property type="molecule type" value="Genomic_DNA"/>
</dbReference>
<dbReference type="EMBL" id="CH471057">
    <property type="protein sequence ID" value="EAX05922.1"/>
    <property type="molecule type" value="Genomic_DNA"/>
</dbReference>
<dbReference type="EMBL" id="BC004302">
    <property type="protein sequence ID" value="AAH04302.1"/>
    <property type="molecule type" value="mRNA"/>
</dbReference>
<dbReference type="EMBL" id="BC009292">
    <property type="protein sequence ID" value="AAH09292.1"/>
    <property type="molecule type" value="mRNA"/>
</dbReference>
<dbReference type="EMBL" id="BC093007">
    <property type="protein sequence ID" value="AAH93007.1"/>
    <property type="molecule type" value="mRNA"/>
</dbReference>
<dbReference type="CCDS" id="CCDS3600.1">
    <molecule id="Q9BT78-1"/>
</dbReference>
<dbReference type="CCDS" id="CCDS58909.1">
    <molecule id="Q9BT78-2"/>
</dbReference>
<dbReference type="RefSeq" id="NP_001244935.1">
    <molecule id="Q9BT78-2"/>
    <property type="nucleotide sequence ID" value="NM_001258006.2"/>
</dbReference>
<dbReference type="RefSeq" id="NP_001317656.1">
    <property type="nucleotide sequence ID" value="NM_001330727.1"/>
</dbReference>
<dbReference type="RefSeq" id="NP_057213.2">
    <molecule id="Q9BT78-1"/>
    <property type="nucleotide sequence ID" value="NM_016129.2"/>
</dbReference>
<dbReference type="PDB" id="4D0P">
    <property type="method" value="X-ray"/>
    <property type="resolution" value="1.60 A"/>
    <property type="chains" value="A=1-363"/>
</dbReference>
<dbReference type="PDB" id="4D10">
    <property type="method" value="X-ray"/>
    <property type="resolution" value="3.80 A"/>
    <property type="chains" value="D/L=1-406"/>
</dbReference>
<dbReference type="PDB" id="4D18">
    <property type="method" value="X-ray"/>
    <property type="resolution" value="4.08 A"/>
    <property type="chains" value="D/L=1-406"/>
</dbReference>
<dbReference type="PDB" id="4WSN">
    <property type="method" value="X-ray"/>
    <property type="resolution" value="5.50 A"/>
    <property type="chains" value="D/L/T/b/j/r=1-406"/>
</dbReference>
<dbReference type="PDB" id="6R6H">
    <property type="method" value="EM"/>
    <property type="resolution" value="8.40 A"/>
    <property type="chains" value="D=1-406"/>
</dbReference>
<dbReference type="PDB" id="6R7F">
    <property type="method" value="EM"/>
    <property type="resolution" value="8.20 A"/>
    <property type="chains" value="D=1-406"/>
</dbReference>
<dbReference type="PDB" id="6R7H">
    <property type="method" value="EM"/>
    <property type="resolution" value="8.80 A"/>
    <property type="chains" value="D=1-406"/>
</dbReference>
<dbReference type="PDB" id="6R7I">
    <property type="method" value="EM"/>
    <property type="resolution" value="5.90 A"/>
    <property type="chains" value="D=1-406"/>
</dbReference>
<dbReference type="PDB" id="6R7N">
    <property type="method" value="EM"/>
    <property type="resolution" value="6.50 A"/>
    <property type="chains" value="D=1-406"/>
</dbReference>
<dbReference type="PDB" id="8H38">
    <property type="method" value="EM"/>
    <property type="resolution" value="4.25 A"/>
    <property type="chains" value="D=1-406"/>
</dbReference>
<dbReference type="PDB" id="8H3A">
    <property type="method" value="EM"/>
    <property type="resolution" value="7.51 A"/>
    <property type="chains" value="D=1-406"/>
</dbReference>
<dbReference type="PDB" id="8H3F">
    <property type="method" value="EM"/>
    <property type="resolution" value="6.73 A"/>
    <property type="chains" value="D=1-406"/>
</dbReference>
<dbReference type="PDBsum" id="4D0P"/>
<dbReference type="PDBsum" id="4D10"/>
<dbReference type="PDBsum" id="4D18"/>
<dbReference type="PDBsum" id="4WSN"/>
<dbReference type="PDBsum" id="6R6H"/>
<dbReference type="PDBsum" id="6R7F"/>
<dbReference type="PDBsum" id="6R7H"/>
<dbReference type="PDBsum" id="6R7I"/>
<dbReference type="PDBsum" id="6R7N"/>
<dbReference type="PDBsum" id="8H38"/>
<dbReference type="PDBsum" id="8H3A"/>
<dbReference type="PDBsum" id="8H3F"/>
<dbReference type="EMDB" id="EMD-12965"/>
<dbReference type="EMDB" id="EMD-3313"/>
<dbReference type="EMDB" id="EMD-3314"/>
<dbReference type="EMDB" id="EMD-3315"/>
<dbReference type="EMDB" id="EMD-3316"/>
<dbReference type="EMDB" id="EMD-3317"/>
<dbReference type="EMDB" id="EMD-3401"/>
<dbReference type="EMDB" id="EMD-34455"/>
<dbReference type="EMDB" id="EMD-34462"/>
<dbReference type="EMDB" id="EMD-34467"/>
<dbReference type="EMDB" id="EMD-4736"/>
<dbReference type="EMDB" id="EMD-4739"/>
<dbReference type="EMDB" id="EMD-4741"/>
<dbReference type="EMDB" id="EMD-4742"/>
<dbReference type="EMDB" id="EMD-4744"/>
<dbReference type="SMR" id="Q9BT78"/>
<dbReference type="BioGRID" id="119324">
    <property type="interactions" value="214"/>
</dbReference>
<dbReference type="ComplexPortal" id="CPX-1870">
    <property type="entry name" value="COP9 signalosome variant 1"/>
</dbReference>
<dbReference type="ComplexPortal" id="CPX-1871">
    <property type="entry name" value="COP9 signalosome variant 2"/>
</dbReference>
<dbReference type="CORUM" id="Q9BT78"/>
<dbReference type="DIP" id="DIP-34516N"/>
<dbReference type="FunCoup" id="Q9BT78">
    <property type="interactions" value="3773"/>
</dbReference>
<dbReference type="IntAct" id="Q9BT78">
    <property type="interactions" value="82"/>
</dbReference>
<dbReference type="MINT" id="Q9BT78"/>
<dbReference type="STRING" id="9606.ENSP00000424655"/>
<dbReference type="GlyGen" id="Q9BT78">
    <property type="glycosylation" value="2 sites, 1 N-linked glycan (1 site), 1 O-linked glycan (1 site)"/>
</dbReference>
<dbReference type="iPTMnet" id="Q9BT78"/>
<dbReference type="PhosphoSitePlus" id="Q9BT78"/>
<dbReference type="SwissPalm" id="Q9BT78"/>
<dbReference type="BioMuta" id="COPS4"/>
<dbReference type="DMDM" id="55976582"/>
<dbReference type="OGP" id="Q9BT78"/>
<dbReference type="REPRODUCTION-2DPAGE" id="IPI00171844"/>
<dbReference type="jPOST" id="Q9BT78"/>
<dbReference type="MassIVE" id="Q9BT78"/>
<dbReference type="PaxDb" id="9606-ENSP00000264389"/>
<dbReference type="PeptideAtlas" id="Q9BT78"/>
<dbReference type="ProteomicsDB" id="3653"/>
<dbReference type="ProteomicsDB" id="78958">
    <molecule id="Q9BT78-1"/>
</dbReference>
<dbReference type="Pumba" id="Q9BT78"/>
<dbReference type="Antibodypedia" id="14119">
    <property type="antibodies" value="132 antibodies from 26 providers"/>
</dbReference>
<dbReference type="DNASU" id="51138"/>
<dbReference type="Ensembl" id="ENST00000264389.7">
    <molecule id="Q9BT78-1"/>
    <property type="protein sequence ID" value="ENSP00000264389.2"/>
    <property type="gene ID" value="ENSG00000138663.9"/>
</dbReference>
<dbReference type="Ensembl" id="ENST00000509093.5">
    <molecule id="Q9BT78-2"/>
    <property type="protein sequence ID" value="ENSP00000425976.1"/>
    <property type="gene ID" value="ENSG00000138663.9"/>
</dbReference>
<dbReference type="GeneID" id="51138"/>
<dbReference type="KEGG" id="hsa:51138"/>
<dbReference type="MANE-Select" id="ENST00000264389.7">
    <property type="protein sequence ID" value="ENSP00000264389.2"/>
    <property type="RefSeq nucleotide sequence ID" value="NM_016129.3"/>
    <property type="RefSeq protein sequence ID" value="NP_057213.2"/>
</dbReference>
<dbReference type="UCSC" id="uc003hoa.4">
    <molecule id="Q9BT78-1"/>
    <property type="organism name" value="human"/>
</dbReference>
<dbReference type="AGR" id="HGNC:16702"/>
<dbReference type="CTD" id="51138"/>
<dbReference type="DisGeNET" id="51138"/>
<dbReference type="GeneCards" id="COPS4"/>
<dbReference type="HGNC" id="HGNC:16702">
    <property type="gene designation" value="COPS4"/>
</dbReference>
<dbReference type="HPA" id="ENSG00000138663">
    <property type="expression patterns" value="Low tissue specificity"/>
</dbReference>
<dbReference type="MIM" id="616008">
    <property type="type" value="gene"/>
</dbReference>
<dbReference type="neXtProt" id="NX_Q9BT78"/>
<dbReference type="OpenTargets" id="ENSG00000138663"/>
<dbReference type="PharmGKB" id="PA26756"/>
<dbReference type="VEuPathDB" id="HostDB:ENSG00000138663"/>
<dbReference type="eggNOG" id="KOG1497">
    <property type="taxonomic scope" value="Eukaryota"/>
</dbReference>
<dbReference type="GeneTree" id="ENSGT00940000153510"/>
<dbReference type="InParanoid" id="Q9BT78"/>
<dbReference type="OrthoDB" id="295656at2759"/>
<dbReference type="PAN-GO" id="Q9BT78">
    <property type="GO annotations" value="1 GO annotation based on evolutionary models"/>
</dbReference>
<dbReference type="PhylomeDB" id="Q9BT78"/>
<dbReference type="TreeFam" id="TF101147"/>
<dbReference type="PathwayCommons" id="Q9BT78"/>
<dbReference type="Reactome" id="R-HSA-5696394">
    <property type="pathway name" value="DNA Damage Recognition in GG-NER"/>
</dbReference>
<dbReference type="Reactome" id="R-HSA-6781823">
    <property type="pathway name" value="Formation of TC-NER Pre-Incision Complex"/>
</dbReference>
<dbReference type="Reactome" id="R-HSA-8856825">
    <property type="pathway name" value="Cargo recognition for clathrin-mediated endocytosis"/>
</dbReference>
<dbReference type="Reactome" id="R-HSA-8951664">
    <property type="pathway name" value="Neddylation"/>
</dbReference>
<dbReference type="Reactome" id="R-HSA-9013422">
    <property type="pathway name" value="RHOBTB1 GTPase cycle"/>
</dbReference>
<dbReference type="SignaLink" id="Q9BT78"/>
<dbReference type="SIGNOR" id="Q9BT78"/>
<dbReference type="BioGRID-ORCS" id="51138">
    <property type="hits" value="728 hits in 1181 CRISPR screens"/>
</dbReference>
<dbReference type="CD-CODE" id="8C2F96ED">
    <property type="entry name" value="Centrosome"/>
</dbReference>
<dbReference type="ChiTaRS" id="COPS4">
    <property type="organism name" value="human"/>
</dbReference>
<dbReference type="EvolutionaryTrace" id="Q9BT78"/>
<dbReference type="GeneWiki" id="COPS4"/>
<dbReference type="GenomeRNAi" id="51138"/>
<dbReference type="Pharos" id="Q9BT78">
    <property type="development level" value="Tbio"/>
</dbReference>
<dbReference type="PRO" id="PR:Q9BT78"/>
<dbReference type="Proteomes" id="UP000005640">
    <property type="component" value="Chromosome 4"/>
</dbReference>
<dbReference type="RNAct" id="Q9BT78">
    <property type="molecule type" value="protein"/>
</dbReference>
<dbReference type="Bgee" id="ENSG00000138663">
    <property type="expression patterns" value="Expressed in biceps brachii and 213 other cell types or tissues"/>
</dbReference>
<dbReference type="ExpressionAtlas" id="Q9BT78">
    <property type="expression patterns" value="baseline and differential"/>
</dbReference>
<dbReference type="GO" id="GO:0030054">
    <property type="term" value="C:cell junction"/>
    <property type="evidence" value="ECO:0000314"/>
    <property type="project" value="HPA"/>
</dbReference>
<dbReference type="GO" id="GO:0008180">
    <property type="term" value="C:COP9 signalosome"/>
    <property type="evidence" value="ECO:0000314"/>
    <property type="project" value="UniProtKB"/>
</dbReference>
<dbReference type="GO" id="GO:0005737">
    <property type="term" value="C:cytoplasm"/>
    <property type="evidence" value="ECO:0000314"/>
    <property type="project" value="ComplexPortal"/>
</dbReference>
<dbReference type="GO" id="GO:0005829">
    <property type="term" value="C:cytosol"/>
    <property type="evidence" value="ECO:0000304"/>
    <property type="project" value="Reactome"/>
</dbReference>
<dbReference type="GO" id="GO:0016607">
    <property type="term" value="C:nuclear speck"/>
    <property type="evidence" value="ECO:0000314"/>
    <property type="project" value="HPA"/>
</dbReference>
<dbReference type="GO" id="GO:0005654">
    <property type="term" value="C:nucleoplasm"/>
    <property type="evidence" value="ECO:0000304"/>
    <property type="project" value="Reactome"/>
</dbReference>
<dbReference type="GO" id="GO:0005634">
    <property type="term" value="C:nucleus"/>
    <property type="evidence" value="ECO:0000314"/>
    <property type="project" value="ComplexPortal"/>
</dbReference>
<dbReference type="GO" id="GO:0008021">
    <property type="term" value="C:synaptic vesicle"/>
    <property type="evidence" value="ECO:0000314"/>
    <property type="project" value="UniProtKB"/>
</dbReference>
<dbReference type="GO" id="GO:0019784">
    <property type="term" value="F:deNEDDylase activity"/>
    <property type="evidence" value="ECO:0000304"/>
    <property type="project" value="Reactome"/>
</dbReference>
<dbReference type="GO" id="GO:0000338">
    <property type="term" value="P:protein deneddylation"/>
    <property type="evidence" value="ECO:0000314"/>
    <property type="project" value="UniProtKB"/>
</dbReference>
<dbReference type="GO" id="GO:0045116">
    <property type="term" value="P:protein neddylation"/>
    <property type="evidence" value="ECO:0000303"/>
    <property type="project" value="ComplexPortal"/>
</dbReference>
<dbReference type="GO" id="GO:2000434">
    <property type="term" value="P:regulation of protein neddylation"/>
    <property type="evidence" value="ECO:0000303"/>
    <property type="project" value="ComplexPortal"/>
</dbReference>
<dbReference type="FunFam" id="1.10.10.10:FF:000130">
    <property type="entry name" value="COP9 signalosome complex subunit 4"/>
    <property type="match status" value="1"/>
</dbReference>
<dbReference type="Gene3D" id="1.10.10.10">
    <property type="entry name" value="Winged helix-like DNA-binding domain superfamily/Winged helix DNA-binding domain"/>
    <property type="match status" value="1"/>
</dbReference>
<dbReference type="InterPro" id="IPR041406">
    <property type="entry name" value="CSN4_HTH"/>
</dbReference>
<dbReference type="InterPro" id="IPR000717">
    <property type="entry name" value="PCI_dom"/>
</dbReference>
<dbReference type="InterPro" id="IPR054559">
    <property type="entry name" value="PSMD12-CSN4-like_N"/>
</dbReference>
<dbReference type="InterPro" id="IPR040134">
    <property type="entry name" value="PSMD12/CSN4"/>
</dbReference>
<dbReference type="InterPro" id="IPR036388">
    <property type="entry name" value="WH-like_DNA-bd_sf"/>
</dbReference>
<dbReference type="InterPro" id="IPR036390">
    <property type="entry name" value="WH_DNA-bd_sf"/>
</dbReference>
<dbReference type="PANTHER" id="PTHR10855">
    <property type="entry name" value="26S PROTEASOME NON-ATPASE REGULATORY SUBUNIT 12/COP9 SIGNALOSOME COMPLEX SUBUNIT 4"/>
    <property type="match status" value="1"/>
</dbReference>
<dbReference type="PANTHER" id="PTHR10855:SF2">
    <property type="entry name" value="COP9 SIGNALOSOME COMPLEX SUBUNIT 4"/>
    <property type="match status" value="1"/>
</dbReference>
<dbReference type="Pfam" id="PF18420">
    <property type="entry name" value="CSN4_RPN5_eIF3a"/>
    <property type="match status" value="1"/>
</dbReference>
<dbReference type="Pfam" id="PF01399">
    <property type="entry name" value="PCI"/>
    <property type="match status" value="1"/>
</dbReference>
<dbReference type="Pfam" id="PF22241">
    <property type="entry name" value="PSMD12-CSN4_N"/>
    <property type="match status" value="1"/>
</dbReference>
<dbReference type="SMART" id="SM00088">
    <property type="entry name" value="PINT"/>
    <property type="match status" value="1"/>
</dbReference>
<dbReference type="SUPFAM" id="SSF46785">
    <property type="entry name" value="Winged helix' DNA-binding domain"/>
    <property type="match status" value="1"/>
</dbReference>
<dbReference type="PROSITE" id="PS50250">
    <property type="entry name" value="PCI"/>
    <property type="match status" value="1"/>
</dbReference>
<organism>
    <name type="scientific">Homo sapiens</name>
    <name type="common">Human</name>
    <dbReference type="NCBI Taxonomy" id="9606"/>
    <lineage>
        <taxon>Eukaryota</taxon>
        <taxon>Metazoa</taxon>
        <taxon>Chordata</taxon>
        <taxon>Craniata</taxon>
        <taxon>Vertebrata</taxon>
        <taxon>Euteleostomi</taxon>
        <taxon>Mammalia</taxon>
        <taxon>Eutheria</taxon>
        <taxon>Euarchontoglires</taxon>
        <taxon>Primates</taxon>
        <taxon>Haplorrhini</taxon>
        <taxon>Catarrhini</taxon>
        <taxon>Hominidae</taxon>
        <taxon>Homo</taxon>
    </lineage>
</organism>
<accession>Q9BT78</accession>
<accession>B3KN88</accession>
<accession>B3KST5</accession>
<accession>Q561W7</accession>
<accession>Q9NW31</accession>
<accession>Q9Y677</accession>
<protein>
    <recommendedName>
        <fullName>COP9 signalosome complex subunit 4</fullName>
        <shortName>SGN4</shortName>
        <shortName>Signalosome subunit 4</shortName>
    </recommendedName>
    <alternativeName>
        <fullName>JAB1-containing signalosome subunit 4</fullName>
    </alternativeName>
</protein>
<proteinExistence type="evidence at protein level"/>
<sequence length="406" mass="46269">MAAAVRQDLAQLMNSSGSHKDLAGKYRQILEKAIQLSGAEQLEALKAFVEAMVNENVSLVISRQLLTDFCTHLPNLPDSTAKEIYHFTLEKIQPRVISFEEQVASIRQHLASIYEKEEDWRNAAQVLVGIPLETGQKQYNVDYKLETYLKIARLYLEDDDPVQAEAYINRASLLQNESTNEQLQIHYKVCYARVLDYRRKFIEAAQRYNELSYKTIVHESERLEALKHALHCTILASAGQQRSRMLATLFKDERCQQLAAYGILEKMYLDRIIRGNQLQEFAAMLMPHQKATTADGSSILDRAVIEHNLLSASKLYNNITFEELGALLEIPAAKAEKIASQMITEGRMNGFIDQIDGIVHFETREALPTWDKQIQSLCFQVNNLLEKISQTAPEWTAQAMEAQMAQ</sequence>
<name>CSN4_HUMAN</name>
<gene>
    <name type="primary">COPS4</name>
    <name type="synonym">CSN4</name>
</gene>
<reference key="1">
    <citation type="submission" date="1998-10" db="EMBL/GenBank/DDBJ databases">
        <title>Human COP9 complex subunit 4 gene.</title>
        <authorList>
            <person name="Song H."/>
            <person name="Peng Y."/>
            <person name="Dai M."/>
            <person name="Huang Q."/>
            <person name="Mao Y."/>
            <person name="Zhang Q."/>
            <person name="Mao M."/>
            <person name="Fu G."/>
            <person name="Luo M."/>
            <person name="Chen J."/>
            <person name="Hu R."/>
        </authorList>
    </citation>
    <scope>NUCLEOTIDE SEQUENCE [MRNA] (ISOFORM 1)</scope>
    <source>
        <tissue>Pituitary</tissue>
    </source>
</reference>
<reference key="2">
    <citation type="journal article" date="2004" name="Nat. Genet.">
        <title>Complete sequencing and characterization of 21,243 full-length human cDNAs.</title>
        <authorList>
            <person name="Ota T."/>
            <person name="Suzuki Y."/>
            <person name="Nishikawa T."/>
            <person name="Otsuki T."/>
            <person name="Sugiyama T."/>
            <person name="Irie R."/>
            <person name="Wakamatsu A."/>
            <person name="Hayashi K."/>
            <person name="Sato H."/>
            <person name="Nagai K."/>
            <person name="Kimura K."/>
            <person name="Makita H."/>
            <person name="Sekine M."/>
            <person name="Obayashi M."/>
            <person name="Nishi T."/>
            <person name="Shibahara T."/>
            <person name="Tanaka T."/>
            <person name="Ishii S."/>
            <person name="Yamamoto J."/>
            <person name="Saito K."/>
            <person name="Kawai Y."/>
            <person name="Isono Y."/>
            <person name="Nakamura Y."/>
            <person name="Nagahari K."/>
            <person name="Murakami K."/>
            <person name="Yasuda T."/>
            <person name="Iwayanagi T."/>
            <person name="Wagatsuma M."/>
            <person name="Shiratori A."/>
            <person name="Sudo H."/>
            <person name="Hosoiri T."/>
            <person name="Kaku Y."/>
            <person name="Kodaira H."/>
            <person name="Kondo H."/>
            <person name="Sugawara M."/>
            <person name="Takahashi M."/>
            <person name="Kanda K."/>
            <person name="Yokoi T."/>
            <person name="Furuya T."/>
            <person name="Kikkawa E."/>
            <person name="Omura Y."/>
            <person name="Abe K."/>
            <person name="Kamihara K."/>
            <person name="Katsuta N."/>
            <person name="Sato K."/>
            <person name="Tanikawa M."/>
            <person name="Yamazaki M."/>
            <person name="Ninomiya K."/>
            <person name="Ishibashi T."/>
            <person name="Yamashita H."/>
            <person name="Murakawa K."/>
            <person name="Fujimori K."/>
            <person name="Tanai H."/>
            <person name="Kimata M."/>
            <person name="Watanabe M."/>
            <person name="Hiraoka S."/>
            <person name="Chiba Y."/>
            <person name="Ishida S."/>
            <person name="Ono Y."/>
            <person name="Takiguchi S."/>
            <person name="Watanabe S."/>
            <person name="Yosida M."/>
            <person name="Hotuta T."/>
            <person name="Kusano J."/>
            <person name="Kanehori K."/>
            <person name="Takahashi-Fujii A."/>
            <person name="Hara H."/>
            <person name="Tanase T.-O."/>
            <person name="Nomura Y."/>
            <person name="Togiya S."/>
            <person name="Komai F."/>
            <person name="Hara R."/>
            <person name="Takeuchi K."/>
            <person name="Arita M."/>
            <person name="Imose N."/>
            <person name="Musashino K."/>
            <person name="Yuuki H."/>
            <person name="Oshima A."/>
            <person name="Sasaki N."/>
            <person name="Aotsuka S."/>
            <person name="Yoshikawa Y."/>
            <person name="Matsunawa H."/>
            <person name="Ichihara T."/>
            <person name="Shiohata N."/>
            <person name="Sano S."/>
            <person name="Moriya S."/>
            <person name="Momiyama H."/>
            <person name="Satoh N."/>
            <person name="Takami S."/>
            <person name="Terashima Y."/>
            <person name="Suzuki O."/>
            <person name="Nakagawa S."/>
            <person name="Senoh A."/>
            <person name="Mizoguchi H."/>
            <person name="Goto Y."/>
            <person name="Shimizu F."/>
            <person name="Wakebe H."/>
            <person name="Hishigaki H."/>
            <person name="Watanabe T."/>
            <person name="Sugiyama A."/>
            <person name="Takemoto M."/>
            <person name="Kawakami B."/>
            <person name="Yamazaki M."/>
            <person name="Watanabe K."/>
            <person name="Kumagai A."/>
            <person name="Itakura S."/>
            <person name="Fukuzumi Y."/>
            <person name="Fujimori Y."/>
            <person name="Komiyama M."/>
            <person name="Tashiro H."/>
            <person name="Tanigami A."/>
            <person name="Fujiwara T."/>
            <person name="Ono T."/>
            <person name="Yamada K."/>
            <person name="Fujii Y."/>
            <person name="Ozaki K."/>
            <person name="Hirao M."/>
            <person name="Ohmori Y."/>
            <person name="Kawabata A."/>
            <person name="Hikiji T."/>
            <person name="Kobatake N."/>
            <person name="Inagaki H."/>
            <person name="Ikema Y."/>
            <person name="Okamoto S."/>
            <person name="Okitani R."/>
            <person name="Kawakami T."/>
            <person name="Noguchi S."/>
            <person name="Itoh T."/>
            <person name="Shigeta K."/>
            <person name="Senba T."/>
            <person name="Matsumura K."/>
            <person name="Nakajima Y."/>
            <person name="Mizuno T."/>
            <person name="Morinaga M."/>
            <person name="Sasaki M."/>
            <person name="Togashi T."/>
            <person name="Oyama M."/>
            <person name="Hata H."/>
            <person name="Watanabe M."/>
            <person name="Komatsu T."/>
            <person name="Mizushima-Sugano J."/>
            <person name="Satoh T."/>
            <person name="Shirai Y."/>
            <person name="Takahashi Y."/>
            <person name="Nakagawa K."/>
            <person name="Okumura K."/>
            <person name="Nagase T."/>
            <person name="Nomura N."/>
            <person name="Kikuchi H."/>
            <person name="Masuho Y."/>
            <person name="Yamashita R."/>
            <person name="Nakai K."/>
            <person name="Yada T."/>
            <person name="Nakamura Y."/>
            <person name="Ohara O."/>
            <person name="Isogai T."/>
            <person name="Sugano S."/>
        </authorList>
    </citation>
    <scope>NUCLEOTIDE SEQUENCE [LARGE SCALE MRNA] (ISOFORMS 1 AND 2)</scope>
    <source>
        <tissue>Cerebellum</tissue>
        <tissue>Teratocarcinoma</tissue>
    </source>
</reference>
<reference key="3">
    <citation type="journal article" date="2005" name="Nature">
        <title>Generation and annotation of the DNA sequences of human chromosomes 2 and 4.</title>
        <authorList>
            <person name="Hillier L.W."/>
            <person name="Graves T.A."/>
            <person name="Fulton R.S."/>
            <person name="Fulton L.A."/>
            <person name="Pepin K.H."/>
            <person name="Minx P."/>
            <person name="Wagner-McPherson C."/>
            <person name="Layman D."/>
            <person name="Wylie K."/>
            <person name="Sekhon M."/>
            <person name="Becker M.C."/>
            <person name="Fewell G.A."/>
            <person name="Delehaunty K.D."/>
            <person name="Miner T.L."/>
            <person name="Nash W.E."/>
            <person name="Kremitzki C."/>
            <person name="Oddy L."/>
            <person name="Du H."/>
            <person name="Sun H."/>
            <person name="Bradshaw-Cordum H."/>
            <person name="Ali J."/>
            <person name="Carter J."/>
            <person name="Cordes M."/>
            <person name="Harris A."/>
            <person name="Isak A."/>
            <person name="van Brunt A."/>
            <person name="Nguyen C."/>
            <person name="Du F."/>
            <person name="Courtney L."/>
            <person name="Kalicki J."/>
            <person name="Ozersky P."/>
            <person name="Abbott S."/>
            <person name="Armstrong J."/>
            <person name="Belter E.A."/>
            <person name="Caruso L."/>
            <person name="Cedroni M."/>
            <person name="Cotton M."/>
            <person name="Davidson T."/>
            <person name="Desai A."/>
            <person name="Elliott G."/>
            <person name="Erb T."/>
            <person name="Fronick C."/>
            <person name="Gaige T."/>
            <person name="Haakenson W."/>
            <person name="Haglund K."/>
            <person name="Holmes A."/>
            <person name="Harkins R."/>
            <person name="Kim K."/>
            <person name="Kruchowski S.S."/>
            <person name="Strong C.M."/>
            <person name="Grewal N."/>
            <person name="Goyea E."/>
            <person name="Hou S."/>
            <person name="Levy A."/>
            <person name="Martinka S."/>
            <person name="Mead K."/>
            <person name="McLellan M.D."/>
            <person name="Meyer R."/>
            <person name="Randall-Maher J."/>
            <person name="Tomlinson C."/>
            <person name="Dauphin-Kohlberg S."/>
            <person name="Kozlowicz-Reilly A."/>
            <person name="Shah N."/>
            <person name="Swearengen-Shahid S."/>
            <person name="Snider J."/>
            <person name="Strong J.T."/>
            <person name="Thompson J."/>
            <person name="Yoakum M."/>
            <person name="Leonard S."/>
            <person name="Pearman C."/>
            <person name="Trani L."/>
            <person name="Radionenko M."/>
            <person name="Waligorski J.E."/>
            <person name="Wang C."/>
            <person name="Rock S.M."/>
            <person name="Tin-Wollam A.-M."/>
            <person name="Maupin R."/>
            <person name="Latreille P."/>
            <person name="Wendl M.C."/>
            <person name="Yang S.-P."/>
            <person name="Pohl C."/>
            <person name="Wallis J.W."/>
            <person name="Spieth J."/>
            <person name="Bieri T.A."/>
            <person name="Berkowicz N."/>
            <person name="Nelson J.O."/>
            <person name="Osborne J."/>
            <person name="Ding L."/>
            <person name="Meyer R."/>
            <person name="Sabo A."/>
            <person name="Shotland Y."/>
            <person name="Sinha P."/>
            <person name="Wohldmann P.E."/>
            <person name="Cook L.L."/>
            <person name="Hickenbotham M.T."/>
            <person name="Eldred J."/>
            <person name="Williams D."/>
            <person name="Jones T.A."/>
            <person name="She X."/>
            <person name="Ciccarelli F.D."/>
            <person name="Izaurralde E."/>
            <person name="Taylor J."/>
            <person name="Schmutz J."/>
            <person name="Myers R.M."/>
            <person name="Cox D.R."/>
            <person name="Huang X."/>
            <person name="McPherson J.D."/>
            <person name="Mardis E.R."/>
            <person name="Clifton S.W."/>
            <person name="Warren W.C."/>
            <person name="Chinwalla A.T."/>
            <person name="Eddy S.R."/>
            <person name="Marra M.A."/>
            <person name="Ovcharenko I."/>
            <person name="Furey T.S."/>
            <person name="Miller W."/>
            <person name="Eichler E.E."/>
            <person name="Bork P."/>
            <person name="Suyama M."/>
            <person name="Torrents D."/>
            <person name="Waterston R.H."/>
            <person name="Wilson R.K."/>
        </authorList>
    </citation>
    <scope>NUCLEOTIDE SEQUENCE [LARGE SCALE GENOMIC DNA]</scope>
</reference>
<reference key="4">
    <citation type="submission" date="2005-07" db="EMBL/GenBank/DDBJ databases">
        <authorList>
            <person name="Mural R.J."/>
            <person name="Istrail S."/>
            <person name="Sutton G.G."/>
            <person name="Florea L."/>
            <person name="Halpern A.L."/>
            <person name="Mobarry C.M."/>
            <person name="Lippert R."/>
            <person name="Walenz B."/>
            <person name="Shatkay H."/>
            <person name="Dew I."/>
            <person name="Miller J.R."/>
            <person name="Flanigan M.J."/>
            <person name="Edwards N.J."/>
            <person name="Bolanos R."/>
            <person name="Fasulo D."/>
            <person name="Halldorsson B.V."/>
            <person name="Hannenhalli S."/>
            <person name="Turner R."/>
            <person name="Yooseph S."/>
            <person name="Lu F."/>
            <person name="Nusskern D.R."/>
            <person name="Shue B.C."/>
            <person name="Zheng X.H."/>
            <person name="Zhong F."/>
            <person name="Delcher A.L."/>
            <person name="Huson D.H."/>
            <person name="Kravitz S.A."/>
            <person name="Mouchard L."/>
            <person name="Reinert K."/>
            <person name="Remington K.A."/>
            <person name="Clark A.G."/>
            <person name="Waterman M.S."/>
            <person name="Eichler E.E."/>
            <person name="Adams M.D."/>
            <person name="Hunkapiller M.W."/>
            <person name="Myers E.W."/>
            <person name="Venter J.C."/>
        </authorList>
    </citation>
    <scope>NUCLEOTIDE SEQUENCE [LARGE SCALE GENOMIC DNA]</scope>
</reference>
<reference key="5">
    <citation type="journal article" date="2004" name="Genome Res.">
        <title>The status, quality, and expansion of the NIH full-length cDNA project: the Mammalian Gene Collection (MGC).</title>
        <authorList>
            <consortium name="The MGC Project Team"/>
        </authorList>
    </citation>
    <scope>NUCLEOTIDE SEQUENCE [LARGE SCALE MRNA] (ISOFORM 1)</scope>
    <source>
        <tissue>Muscle</tissue>
        <tissue>Pancreas</tissue>
        <tissue>Placenta</tissue>
    </source>
</reference>
<reference key="6">
    <citation type="journal article" date="1998" name="FASEB J.">
        <title>A novel protein complex involved in signal transduction possessing similarities to 26S proteasome subunits.</title>
        <authorList>
            <person name="Seeger M."/>
            <person name="Kraft R."/>
            <person name="Ferrell K."/>
            <person name="Bech-Otschir D."/>
            <person name="Dumdey R."/>
            <person name="Schade R."/>
            <person name="Gordon C."/>
            <person name="Naumann M."/>
            <person name="Dubiel W."/>
        </authorList>
    </citation>
    <scope>PARTIAL PROTEIN SEQUENCE</scope>
    <scope>FUNCTION</scope>
    <scope>SUBCELLULAR LOCATION</scope>
</reference>
<reference key="7">
    <citation type="journal article" date="2001" name="EMBO J.">
        <title>COP9 signalosome-specific phosphorylation targets p53 to degradation by the ubiquitin system.</title>
        <authorList>
            <person name="Bech-Otschir D."/>
            <person name="Kraft R."/>
            <person name="Huang X."/>
            <person name="Henklein P."/>
            <person name="Kapelari B."/>
            <person name="Pollmann C."/>
            <person name="Dubiel W."/>
        </authorList>
    </citation>
    <scope>FUNCTION</scope>
</reference>
<reference key="8">
    <citation type="journal article" date="2001" name="Science">
        <title>Promotion of NEDD-CUL1 conjugate cleavage by COP9 signalosome.</title>
        <authorList>
            <person name="Lyapina S."/>
            <person name="Cope G."/>
            <person name="Shevchenko A."/>
            <person name="Serino G."/>
            <person name="Tsuge T."/>
            <person name="Zhou C."/>
            <person name="Wolf D.A."/>
            <person name="Wei N."/>
            <person name="Shevchenko A."/>
            <person name="Deshaies R.J."/>
        </authorList>
    </citation>
    <scope>FUNCTION</scope>
    <scope>COMPOSITION OF THE CSN COMPLEX</scope>
</reference>
<reference key="9">
    <citation type="journal article" date="2002" name="Electrophoresis">
        <title>Aberrant expression of signaling-related proteins 14-3-3 gamma and RACK1 in fetal Down syndrome brain (trisomy 21).</title>
        <authorList>
            <person name="Peyrl A."/>
            <person name="Weitzdoerfer R."/>
            <person name="Gulesserian T."/>
            <person name="Fountoulakis M."/>
            <person name="Lubec G."/>
        </authorList>
    </citation>
    <scope>IDENTIFICATION BY MASS SPECTROMETRY</scope>
</reference>
<reference key="10">
    <citation type="journal article" date="2003" name="Cell">
        <title>The ubiquitin ligase activity in the DDB2 and CSA complexes is differentially regulated by the COP9 signalosome in response to DNA damage.</title>
        <authorList>
            <person name="Groisman R."/>
            <person name="Polanowska J."/>
            <person name="Kuraoka I."/>
            <person name="Sawada J."/>
            <person name="Saijo M."/>
            <person name="Drapkin R."/>
            <person name="Kisselev A.F."/>
            <person name="Tanaka K."/>
            <person name="Nakatani Y."/>
        </authorList>
    </citation>
    <scope>FUNCTION</scope>
</reference>
<reference key="11">
    <citation type="journal article" date="2003" name="EMBO J.">
        <title>Protein kinase CK2 and protein kinase D are associated with the COP9 signalosome.</title>
        <authorList>
            <person name="Uhle S."/>
            <person name="Medalia O."/>
            <person name="Waldron R."/>
            <person name="Dumdey R."/>
            <person name="Henklein P."/>
            <person name="Bech-Otschir D."/>
            <person name="Huang X."/>
            <person name="Berse M."/>
            <person name="Sperling J."/>
            <person name="Schade R."/>
            <person name="Dubiel W."/>
        </authorList>
    </citation>
    <scope>FUNCTION</scope>
</reference>
<reference key="12">
    <citation type="journal article" date="2008" name="J. Proteome Res.">
        <title>Characterization of the human COP9 signalosome complex using affinity purification and mass spectrometry.</title>
        <authorList>
            <person name="Fang L."/>
            <person name="Wang X."/>
            <person name="Yamoah K."/>
            <person name="Chen P.L."/>
            <person name="Pan Z.Q."/>
            <person name="Huang L."/>
        </authorList>
    </citation>
    <scope>IDENTIFICATION IN THE CSN COMPLEX</scope>
    <scope>CLEAVAGE OF INITIATOR METHIONINE</scope>
    <scope>ACETYLATION AT ALA-2</scope>
</reference>
<reference key="13">
    <citation type="journal article" date="2009" name="Anal. Chem.">
        <title>Lys-N and trypsin cover complementary parts of the phosphoproteome in a refined SCX-based approach.</title>
        <authorList>
            <person name="Gauci S."/>
            <person name="Helbig A.O."/>
            <person name="Slijper M."/>
            <person name="Krijgsveld J."/>
            <person name="Heck A.J."/>
            <person name="Mohammed S."/>
        </authorList>
    </citation>
    <scope>ACETYLATION [LARGE SCALE ANALYSIS] AT ALA-2</scope>
    <scope>CLEAVAGE OF INITIATOR METHIONINE [LARGE SCALE ANALYSIS]</scope>
    <scope>IDENTIFICATION BY MASS SPECTROMETRY [LARGE SCALE ANALYSIS]</scope>
</reference>
<reference key="14">
    <citation type="journal article" date="2009" name="Science">
        <title>Lysine acetylation targets protein complexes and co-regulates major cellular functions.</title>
        <authorList>
            <person name="Choudhary C."/>
            <person name="Kumar C."/>
            <person name="Gnad F."/>
            <person name="Nielsen M.L."/>
            <person name="Rehman M."/>
            <person name="Walther T.C."/>
            <person name="Olsen J.V."/>
            <person name="Mann M."/>
        </authorList>
    </citation>
    <scope>ACETYLATION [LARGE SCALE ANALYSIS] AT LYS-25</scope>
    <scope>IDENTIFICATION BY MASS SPECTROMETRY [LARGE SCALE ANALYSIS]</scope>
</reference>
<reference key="15">
    <citation type="journal article" date="2011" name="BMC Syst. Biol.">
        <title>Initial characterization of the human central proteome.</title>
        <authorList>
            <person name="Burkard T.R."/>
            <person name="Planyavsky M."/>
            <person name="Kaupe I."/>
            <person name="Breitwieser F.P."/>
            <person name="Buerckstuemmer T."/>
            <person name="Bennett K.L."/>
            <person name="Superti-Furga G."/>
            <person name="Colinge J."/>
        </authorList>
    </citation>
    <scope>IDENTIFICATION BY MASS SPECTROMETRY [LARGE SCALE ANALYSIS]</scope>
</reference>
<reference key="16">
    <citation type="journal article" date="2011" name="EMBO J.">
        <title>CSN complex controls the stability of selected synaptic proteins via a torsinA-dependent process.</title>
        <authorList>
            <person name="Granata A."/>
            <person name="Koo S.J."/>
            <person name="Haucke V."/>
            <person name="Schiavo G."/>
            <person name="Warner T.T."/>
        </authorList>
    </citation>
    <scope>FUNCTION IN DENEDDYLATION AND PHOSPHORYLATION</scope>
    <scope>INTERACTION WITH TOR1A AND STON2</scope>
    <scope>SUBCELLULAR LOCATION</scope>
</reference>
<reference key="17">
    <citation type="journal article" date="2014" name="J. Proteomics">
        <title>An enzyme assisted RP-RPLC approach for in-depth analysis of human liver phosphoproteome.</title>
        <authorList>
            <person name="Bian Y."/>
            <person name="Song C."/>
            <person name="Cheng K."/>
            <person name="Dong M."/>
            <person name="Wang F."/>
            <person name="Huang J."/>
            <person name="Sun D."/>
            <person name="Wang L."/>
            <person name="Ye M."/>
            <person name="Zou H."/>
        </authorList>
    </citation>
    <scope>IDENTIFICATION BY MASS SPECTROMETRY [LARGE SCALE ANALYSIS]</scope>
    <source>
        <tissue>Liver</tissue>
    </source>
</reference>
<reference key="18">
    <citation type="journal article" date="2015" name="Cell Rep.">
        <title>CSNAP is a stoichiometric subunit of the COP9 signalosome.</title>
        <authorList>
            <person name="Rozen S."/>
            <person name="Fuezesi-Levi M.G."/>
            <person name="Ben-Nissan G."/>
            <person name="Mizrachi L."/>
            <person name="Gabashvili A."/>
            <person name="Levin Y."/>
            <person name="Ben-Dor S."/>
            <person name="Eisenstein M."/>
            <person name="Sharon M."/>
        </authorList>
    </citation>
    <scope>COMPOSITION OF THE CSN COMPLEX</scope>
</reference>
<reference key="19">
    <citation type="journal article" date="2015" name="PLoS ONE">
        <title>Identification of Novel Proteins Co-Purifying with Cockayne Syndrome Group B (CSB) Reveals Potential Roles for CSB in RNA Metabolism and Chromatin Dynamics.</title>
        <authorList>
            <person name="Nicolai S."/>
            <person name="Filippi S."/>
            <person name="Caputo M."/>
            <person name="Cipak L."/>
            <person name="Gregan J."/>
            <person name="Ammerer G."/>
            <person name="Frontini M."/>
            <person name="Willems D."/>
            <person name="Prantera G."/>
            <person name="Balajee A.S."/>
            <person name="Proietti-De-Santis L."/>
        </authorList>
    </citation>
    <scope>INTERACTION WITH ERCC6</scope>
</reference>
<evidence type="ECO:0000255" key="1">
    <source>
        <dbReference type="PROSITE-ProRule" id="PRU01185"/>
    </source>
</evidence>
<evidence type="ECO:0000269" key="2">
    <source>
    </source>
</evidence>
<evidence type="ECO:0000269" key="3">
    <source>
    </source>
</evidence>
<evidence type="ECO:0000269" key="4">
    <source>
    </source>
</evidence>
<evidence type="ECO:0000269" key="5">
    <source>
    </source>
</evidence>
<evidence type="ECO:0000269" key="6">
    <source>
    </source>
</evidence>
<evidence type="ECO:0000269" key="7">
    <source>
    </source>
</evidence>
<evidence type="ECO:0000269" key="8">
    <source>
    </source>
</evidence>
<evidence type="ECO:0000269" key="9">
    <source>
    </source>
</evidence>
<evidence type="ECO:0000269" key="10">
    <source>
    </source>
</evidence>
<evidence type="ECO:0000303" key="11">
    <source>
    </source>
</evidence>
<evidence type="ECO:0000305" key="12"/>
<evidence type="ECO:0007744" key="13">
    <source>
    </source>
</evidence>
<evidence type="ECO:0007744" key="14">
    <source>
    </source>
</evidence>
<evidence type="ECO:0007829" key="15">
    <source>
        <dbReference type="PDB" id="4D0P"/>
    </source>
</evidence>
<keyword id="KW-0002">3D-structure</keyword>
<keyword id="KW-0007">Acetylation</keyword>
<keyword id="KW-0025">Alternative splicing</keyword>
<keyword id="KW-0963">Cytoplasm</keyword>
<keyword id="KW-0968">Cytoplasmic vesicle</keyword>
<keyword id="KW-0903">Direct protein sequencing</keyword>
<keyword id="KW-0539">Nucleus</keyword>
<keyword id="KW-1267">Proteomics identification</keyword>
<keyword id="KW-1185">Reference proteome</keyword>
<keyword id="KW-0736">Signalosome</keyword>
<keyword id="KW-0770">Synapse</keyword>